<protein>
    <recommendedName>
        <fullName evidence="1">Diaminopimelate epimerase</fullName>
        <shortName evidence="1">DAP epimerase</shortName>
        <ecNumber evidence="1">5.1.1.7</ecNumber>
    </recommendedName>
    <alternativeName>
        <fullName evidence="1">PLP-independent amino acid racemase</fullName>
    </alternativeName>
</protein>
<name>DAPF_MYCGI</name>
<dbReference type="EC" id="5.1.1.7" evidence="1"/>
<dbReference type="EMBL" id="CP000656">
    <property type="protein sequence ID" value="ABP46432.1"/>
    <property type="molecule type" value="Genomic_DNA"/>
</dbReference>
<dbReference type="SMR" id="A4TCN3"/>
<dbReference type="STRING" id="350054.Mflv_3961"/>
<dbReference type="KEGG" id="mgi:Mflv_3961"/>
<dbReference type="eggNOG" id="COG0253">
    <property type="taxonomic scope" value="Bacteria"/>
</dbReference>
<dbReference type="HOGENOM" id="CLU_053306_4_0_11"/>
<dbReference type="OrthoDB" id="9805408at2"/>
<dbReference type="UniPathway" id="UPA00034">
    <property type="reaction ID" value="UER00025"/>
</dbReference>
<dbReference type="GO" id="GO:0005829">
    <property type="term" value="C:cytosol"/>
    <property type="evidence" value="ECO:0007669"/>
    <property type="project" value="TreeGrafter"/>
</dbReference>
<dbReference type="GO" id="GO:0008837">
    <property type="term" value="F:diaminopimelate epimerase activity"/>
    <property type="evidence" value="ECO:0007669"/>
    <property type="project" value="UniProtKB-UniRule"/>
</dbReference>
<dbReference type="GO" id="GO:0009089">
    <property type="term" value="P:lysine biosynthetic process via diaminopimelate"/>
    <property type="evidence" value="ECO:0007669"/>
    <property type="project" value="UniProtKB-UniRule"/>
</dbReference>
<dbReference type="Gene3D" id="3.10.310.10">
    <property type="entry name" value="Diaminopimelate Epimerase, Chain A, domain 1"/>
    <property type="match status" value="2"/>
</dbReference>
<dbReference type="HAMAP" id="MF_00197">
    <property type="entry name" value="DAP_epimerase"/>
    <property type="match status" value="1"/>
</dbReference>
<dbReference type="InterPro" id="IPR018510">
    <property type="entry name" value="DAP_epimerase_AS"/>
</dbReference>
<dbReference type="InterPro" id="IPR001653">
    <property type="entry name" value="DAP_epimerase_DapF"/>
</dbReference>
<dbReference type="NCBIfam" id="TIGR00652">
    <property type="entry name" value="DapF"/>
    <property type="match status" value="1"/>
</dbReference>
<dbReference type="PANTHER" id="PTHR31689:SF0">
    <property type="entry name" value="DIAMINOPIMELATE EPIMERASE"/>
    <property type="match status" value="1"/>
</dbReference>
<dbReference type="PANTHER" id="PTHR31689">
    <property type="entry name" value="DIAMINOPIMELATE EPIMERASE, CHLOROPLASTIC"/>
    <property type="match status" value="1"/>
</dbReference>
<dbReference type="Pfam" id="PF01678">
    <property type="entry name" value="DAP_epimerase"/>
    <property type="match status" value="2"/>
</dbReference>
<dbReference type="SUPFAM" id="SSF54506">
    <property type="entry name" value="Diaminopimelate epimerase-like"/>
    <property type="match status" value="2"/>
</dbReference>
<dbReference type="PROSITE" id="PS01326">
    <property type="entry name" value="DAP_EPIMERASE"/>
    <property type="match status" value="1"/>
</dbReference>
<comment type="function">
    <text evidence="1">Catalyzes the stereoinversion of LL-2,6-diaminopimelate (L,L-DAP) to meso-diaminopimelate (meso-DAP), a precursor of L-lysine and an essential component of the bacterial peptidoglycan.</text>
</comment>
<comment type="catalytic activity">
    <reaction evidence="1">
        <text>(2S,6S)-2,6-diaminopimelate = meso-2,6-diaminopimelate</text>
        <dbReference type="Rhea" id="RHEA:15393"/>
        <dbReference type="ChEBI" id="CHEBI:57609"/>
        <dbReference type="ChEBI" id="CHEBI:57791"/>
        <dbReference type="EC" id="5.1.1.7"/>
    </reaction>
</comment>
<comment type="pathway">
    <text evidence="1">Amino-acid biosynthesis; L-lysine biosynthesis via DAP pathway; DL-2,6-diaminopimelate from LL-2,6-diaminopimelate: step 1/1.</text>
</comment>
<comment type="subunit">
    <text evidence="1">Homodimer.</text>
</comment>
<comment type="subcellular location">
    <subcellularLocation>
        <location evidence="1">Cytoplasm</location>
    </subcellularLocation>
</comment>
<comment type="similarity">
    <text evidence="1">Belongs to the diaminopimelate epimerase family.</text>
</comment>
<feature type="chain" id="PRO_1000077700" description="Diaminopimelate epimerase">
    <location>
        <begin position="1"/>
        <end position="289"/>
    </location>
</feature>
<feature type="active site" description="Proton donor" evidence="1">
    <location>
        <position position="87"/>
    </location>
</feature>
<feature type="active site" description="Proton acceptor" evidence="1">
    <location>
        <position position="226"/>
    </location>
</feature>
<feature type="binding site" evidence="1">
    <location>
        <position position="11"/>
    </location>
    <ligand>
        <name>substrate</name>
    </ligand>
</feature>
<feature type="binding site" evidence="1">
    <location>
        <position position="78"/>
    </location>
    <ligand>
        <name>substrate</name>
    </ligand>
</feature>
<feature type="binding site" evidence="1">
    <location>
        <begin position="88"/>
        <end position="89"/>
    </location>
    <ligand>
        <name>substrate</name>
    </ligand>
</feature>
<feature type="binding site" evidence="1">
    <location>
        <position position="163"/>
    </location>
    <ligand>
        <name>substrate</name>
    </ligand>
</feature>
<feature type="binding site" evidence="1">
    <location>
        <position position="199"/>
    </location>
    <ligand>
        <name>substrate</name>
    </ligand>
</feature>
<feature type="binding site" evidence="1">
    <location>
        <begin position="217"/>
        <end position="218"/>
    </location>
    <ligand>
        <name>substrate</name>
    </ligand>
</feature>
<feature type="binding site" evidence="1">
    <location>
        <begin position="227"/>
        <end position="228"/>
    </location>
    <ligand>
        <name>substrate</name>
    </ligand>
</feature>
<feature type="site" description="Could be important to modulate the pK values of the two catalytic cysteine residues" evidence="1">
    <location>
        <position position="165"/>
    </location>
</feature>
<feature type="site" description="Could be important to modulate the pK values of the two catalytic cysteine residues" evidence="1">
    <location>
        <position position="217"/>
    </location>
</feature>
<keyword id="KW-0028">Amino-acid biosynthesis</keyword>
<keyword id="KW-0963">Cytoplasm</keyword>
<keyword id="KW-0413">Isomerase</keyword>
<keyword id="KW-0457">Lysine biosynthesis</keyword>
<reference key="1">
    <citation type="submission" date="2007-04" db="EMBL/GenBank/DDBJ databases">
        <title>Complete sequence of chromosome of Mycobacterium gilvum PYR-GCK.</title>
        <authorList>
            <consortium name="US DOE Joint Genome Institute"/>
            <person name="Copeland A."/>
            <person name="Lucas S."/>
            <person name="Lapidus A."/>
            <person name="Barry K."/>
            <person name="Detter J.C."/>
            <person name="Glavina del Rio T."/>
            <person name="Hammon N."/>
            <person name="Israni S."/>
            <person name="Dalin E."/>
            <person name="Tice H."/>
            <person name="Pitluck S."/>
            <person name="Chain P."/>
            <person name="Malfatti S."/>
            <person name="Shin M."/>
            <person name="Vergez L."/>
            <person name="Schmutz J."/>
            <person name="Larimer F."/>
            <person name="Land M."/>
            <person name="Hauser L."/>
            <person name="Kyrpides N."/>
            <person name="Mikhailova N."/>
            <person name="Miller C."/>
            <person name="Richardson P."/>
        </authorList>
    </citation>
    <scope>NUCLEOTIDE SEQUENCE [LARGE SCALE GENOMIC DNA]</scope>
    <source>
        <strain>PYR-GCK</strain>
    </source>
</reference>
<gene>
    <name evidence="1" type="primary">dapF</name>
    <name type="ordered locus">Mflv_3961</name>
</gene>
<proteinExistence type="inferred from homology"/>
<sequence>MKFAKGHGTQNDFVLLPDLNAQYSLTARAVAALCDRRRGLGADGLLRVTTAGAALAAGVFDRLPEGVAEDDWFMDYRNADGSIAEMCGNGVRVFAHYLHAGGLEHRSEFVVGSLAGPRPVVLHEADDTTADVTVEMGKAVRCGTGTATVGGRRFSGLAVDVGNPHLACVDEELTDAGLASLDVASPVAFDSTQFPHGVNVEILTAPRDGAVAMRVHERGVGETRSCGTGTVAAAVAALDHQGARTGTLRVRIPGGEVCVTVTETDSYLRGPSVLLAHGELAEQWWAAQH</sequence>
<organism>
    <name type="scientific">Mycolicibacterium gilvum (strain PYR-GCK)</name>
    <name type="common">Mycobacterium gilvum (strain PYR-GCK)</name>
    <dbReference type="NCBI Taxonomy" id="350054"/>
    <lineage>
        <taxon>Bacteria</taxon>
        <taxon>Bacillati</taxon>
        <taxon>Actinomycetota</taxon>
        <taxon>Actinomycetes</taxon>
        <taxon>Mycobacteriales</taxon>
        <taxon>Mycobacteriaceae</taxon>
        <taxon>Mycolicibacterium</taxon>
    </lineage>
</organism>
<evidence type="ECO:0000255" key="1">
    <source>
        <dbReference type="HAMAP-Rule" id="MF_00197"/>
    </source>
</evidence>
<accession>A4TCN3</accession>